<feature type="chain" id="PRO_0000109851" description="Probable tryptophan transport protein">
    <location>
        <begin position="1"/>
        <end position="171"/>
    </location>
</feature>
<feature type="transmembrane region" description="Helical" evidence="2">
    <location>
        <begin position="9"/>
        <end position="31"/>
    </location>
</feature>
<feature type="transmembrane region" description="Helical" evidence="2">
    <location>
        <begin position="58"/>
        <end position="80"/>
    </location>
</feature>
<feature type="transmembrane region" description="Helical" evidence="2">
    <location>
        <begin position="107"/>
        <end position="129"/>
    </location>
</feature>
<feature type="transmembrane region" description="Helical" evidence="2">
    <location>
        <begin position="139"/>
        <end position="161"/>
    </location>
</feature>
<accession>Q97D63</accession>
<sequence>MRMNLKKLIINSLFLAVGVVLNQITPPILFGMKPDFSLAMLFIIILLNDDYKTCISTGVVAGLLAAAVTTFPGGQLPNIIDRIVTTSLVFIALRPFKDKINDKIHMIITTIVGTIISGSVFLGSALIIVGLPASFKALFITVVLPATIINAIVGTIIFVAVKKSMRVVFRQ</sequence>
<keyword id="KW-0029">Amino-acid transport</keyword>
<keyword id="KW-1003">Cell membrane</keyword>
<keyword id="KW-0472">Membrane</keyword>
<keyword id="KW-1185">Reference proteome</keyword>
<keyword id="KW-0812">Transmembrane</keyword>
<keyword id="KW-1133">Transmembrane helix</keyword>
<keyword id="KW-0813">Transport</keyword>
<reference key="1">
    <citation type="journal article" date="2001" name="J. Bacteriol.">
        <title>Genome sequence and comparative analysis of the solvent-producing bacterium Clostridium acetobutylicum.</title>
        <authorList>
            <person name="Noelling J."/>
            <person name="Breton G."/>
            <person name="Omelchenko M.V."/>
            <person name="Makarova K.S."/>
            <person name="Zeng Q."/>
            <person name="Gibson R."/>
            <person name="Lee H.M."/>
            <person name="Dubois J."/>
            <person name="Qiu D."/>
            <person name="Hitti J."/>
            <person name="Wolf Y.I."/>
            <person name="Tatusov R.L."/>
            <person name="Sabathe F."/>
            <person name="Doucette-Stamm L.A."/>
            <person name="Soucaille P."/>
            <person name="Daly M.J."/>
            <person name="Bennett G.N."/>
            <person name="Koonin E.V."/>
            <person name="Smith D.R."/>
        </authorList>
    </citation>
    <scope>NUCLEOTIDE SEQUENCE [LARGE SCALE GENOMIC DNA]</scope>
    <source>
        <strain>ATCC 824 / DSM 792 / JCM 1419 / IAM 19013 / LMG 5710 / NBRC 13948 / NRRL B-527 / VKM B-1787 / 2291 / W</strain>
    </source>
</reference>
<evidence type="ECO:0000250" key="1"/>
<evidence type="ECO:0000255" key="2"/>
<evidence type="ECO:0000305" key="3"/>
<proteinExistence type="inferred from homology"/>
<protein>
    <recommendedName>
        <fullName>Probable tryptophan transport protein</fullName>
    </recommendedName>
</protein>
<comment type="function">
    <text evidence="1">Probably involved in tryptophan uptake.</text>
</comment>
<comment type="subcellular location">
    <subcellularLocation>
        <location evidence="3">Cell membrane</location>
        <topology evidence="3">Multi-pass membrane protein</topology>
    </subcellularLocation>
</comment>
<comment type="similarity">
    <text evidence="3">Belongs to the vitamin uptake transporter (VUT/ECF) (TC 2.A.88) family. TrpP subfamily.</text>
</comment>
<organism>
    <name type="scientific">Clostridium acetobutylicum (strain ATCC 824 / DSM 792 / JCM 1419 / IAM 19013 / LMG 5710 / NBRC 13948 / NRRL B-527 / VKM B-1787 / 2291 / W)</name>
    <dbReference type="NCBI Taxonomy" id="272562"/>
    <lineage>
        <taxon>Bacteria</taxon>
        <taxon>Bacillati</taxon>
        <taxon>Bacillota</taxon>
        <taxon>Clostridia</taxon>
        <taxon>Eubacteriales</taxon>
        <taxon>Clostridiaceae</taxon>
        <taxon>Clostridium</taxon>
    </lineage>
</organism>
<dbReference type="EMBL" id="AE001437">
    <property type="protein sequence ID" value="AAK81540.1"/>
    <property type="molecule type" value="Genomic_DNA"/>
</dbReference>
<dbReference type="PIR" id="A97344">
    <property type="entry name" value="A97344"/>
</dbReference>
<dbReference type="RefSeq" id="NP_350200.1">
    <property type="nucleotide sequence ID" value="NC_003030.1"/>
</dbReference>
<dbReference type="RefSeq" id="WP_010966880.1">
    <property type="nucleotide sequence ID" value="NC_003030.1"/>
</dbReference>
<dbReference type="SMR" id="Q97D63"/>
<dbReference type="STRING" id="272562.CA_C3617"/>
<dbReference type="KEGG" id="cac:CA_C3617"/>
<dbReference type="PATRIC" id="fig|272562.8.peg.3807"/>
<dbReference type="eggNOG" id="ENOG5032SBU">
    <property type="taxonomic scope" value="Bacteria"/>
</dbReference>
<dbReference type="HOGENOM" id="CLU_126994_0_0_9"/>
<dbReference type="OrthoDB" id="2243651at2"/>
<dbReference type="Proteomes" id="UP000000814">
    <property type="component" value="Chromosome"/>
</dbReference>
<dbReference type="GO" id="GO:0005886">
    <property type="term" value="C:plasma membrane"/>
    <property type="evidence" value="ECO:0007669"/>
    <property type="project" value="UniProtKB-SubCell"/>
</dbReference>
<dbReference type="GO" id="GO:0006865">
    <property type="term" value="P:amino acid transport"/>
    <property type="evidence" value="ECO:0007669"/>
    <property type="project" value="UniProtKB-KW"/>
</dbReference>
<dbReference type="Gene3D" id="1.10.1760.20">
    <property type="match status" value="1"/>
</dbReference>
<dbReference type="InterPro" id="IPR031360">
    <property type="entry name" value="TrpP"/>
</dbReference>
<dbReference type="Pfam" id="PF17099">
    <property type="entry name" value="TrpP"/>
    <property type="match status" value="1"/>
</dbReference>
<gene>
    <name type="primary">trpP</name>
    <name type="ordered locus">CA_C3617</name>
</gene>
<name>TRPP_CLOAB</name>